<organism>
    <name type="scientific">Rubrobacter xylanophilus (strain DSM 9941 / JCM 11954 / NBRC 16129 / PRD-1)</name>
    <dbReference type="NCBI Taxonomy" id="266117"/>
    <lineage>
        <taxon>Bacteria</taxon>
        <taxon>Bacillati</taxon>
        <taxon>Actinomycetota</taxon>
        <taxon>Rubrobacteria</taxon>
        <taxon>Rubrobacterales</taxon>
        <taxon>Rubrobacteraceae</taxon>
        <taxon>Rubrobacter</taxon>
    </lineage>
</organism>
<proteinExistence type="inferred from homology"/>
<protein>
    <recommendedName>
        <fullName evidence="1">Probable transcriptional regulatory protein Rxyl_1318</fullName>
    </recommendedName>
</protein>
<evidence type="ECO:0000255" key="1">
    <source>
        <dbReference type="HAMAP-Rule" id="MF_00693"/>
    </source>
</evidence>
<accession>Q1AWE6</accession>
<reference key="1">
    <citation type="submission" date="2006-06" db="EMBL/GenBank/DDBJ databases">
        <title>Complete sequence of Rubrobacter xylanophilus DSM 9941.</title>
        <authorList>
            <consortium name="US DOE Joint Genome Institute"/>
            <person name="Copeland A."/>
            <person name="Lucas S."/>
            <person name="Lapidus A."/>
            <person name="Barry K."/>
            <person name="Detter J.C."/>
            <person name="Glavina del Rio T."/>
            <person name="Hammon N."/>
            <person name="Israni S."/>
            <person name="Dalin E."/>
            <person name="Tice H."/>
            <person name="Pitluck S."/>
            <person name="Munk A.C."/>
            <person name="Brettin T."/>
            <person name="Bruce D."/>
            <person name="Han C."/>
            <person name="Tapia R."/>
            <person name="Gilna P."/>
            <person name="Schmutz J."/>
            <person name="Larimer F."/>
            <person name="Land M."/>
            <person name="Hauser L."/>
            <person name="Kyrpides N."/>
            <person name="Lykidis A."/>
            <person name="da Costa M.S."/>
            <person name="Rainey F.A."/>
            <person name="Empadinhas N."/>
            <person name="Jolivet E."/>
            <person name="Battista J.R."/>
            <person name="Richardson P."/>
        </authorList>
    </citation>
    <scope>NUCLEOTIDE SEQUENCE [LARGE SCALE GENOMIC DNA]</scope>
    <source>
        <strain>DSM 9941 / JCM 11954 / NBRC 16129 / PRD-1</strain>
    </source>
</reference>
<gene>
    <name type="ordered locus">Rxyl_1318</name>
</gene>
<keyword id="KW-0963">Cytoplasm</keyword>
<keyword id="KW-0238">DNA-binding</keyword>
<keyword id="KW-1185">Reference proteome</keyword>
<keyword id="KW-0804">Transcription</keyword>
<keyword id="KW-0805">Transcription regulation</keyword>
<dbReference type="EMBL" id="CP000386">
    <property type="protein sequence ID" value="ABG04282.1"/>
    <property type="molecule type" value="Genomic_DNA"/>
</dbReference>
<dbReference type="RefSeq" id="WP_011564299.1">
    <property type="nucleotide sequence ID" value="NC_008148.1"/>
</dbReference>
<dbReference type="SMR" id="Q1AWE6"/>
<dbReference type="STRING" id="266117.Rxyl_1318"/>
<dbReference type="KEGG" id="rxy:Rxyl_1318"/>
<dbReference type="eggNOG" id="COG0217">
    <property type="taxonomic scope" value="Bacteria"/>
</dbReference>
<dbReference type="HOGENOM" id="CLU_062974_2_2_11"/>
<dbReference type="OrthoDB" id="9781053at2"/>
<dbReference type="PhylomeDB" id="Q1AWE6"/>
<dbReference type="Proteomes" id="UP000006637">
    <property type="component" value="Chromosome"/>
</dbReference>
<dbReference type="GO" id="GO:0005829">
    <property type="term" value="C:cytosol"/>
    <property type="evidence" value="ECO:0007669"/>
    <property type="project" value="TreeGrafter"/>
</dbReference>
<dbReference type="GO" id="GO:0003677">
    <property type="term" value="F:DNA binding"/>
    <property type="evidence" value="ECO:0007669"/>
    <property type="project" value="UniProtKB-UniRule"/>
</dbReference>
<dbReference type="GO" id="GO:0006355">
    <property type="term" value="P:regulation of DNA-templated transcription"/>
    <property type="evidence" value="ECO:0007669"/>
    <property type="project" value="UniProtKB-UniRule"/>
</dbReference>
<dbReference type="FunFam" id="1.10.10.200:FF:000002">
    <property type="entry name" value="Probable transcriptional regulatory protein CLM62_37755"/>
    <property type="match status" value="1"/>
</dbReference>
<dbReference type="FunFam" id="3.30.70.980:FF:000002">
    <property type="entry name" value="Probable transcriptional regulatory protein YebC"/>
    <property type="match status" value="1"/>
</dbReference>
<dbReference type="Gene3D" id="1.10.10.200">
    <property type="match status" value="1"/>
</dbReference>
<dbReference type="Gene3D" id="3.30.70.980">
    <property type="match status" value="2"/>
</dbReference>
<dbReference type="HAMAP" id="MF_00693">
    <property type="entry name" value="Transcrip_reg_TACO1"/>
    <property type="match status" value="1"/>
</dbReference>
<dbReference type="InterPro" id="IPR017856">
    <property type="entry name" value="Integrase-like_N"/>
</dbReference>
<dbReference type="InterPro" id="IPR048300">
    <property type="entry name" value="TACO1_YebC-like_2nd/3rd_dom"/>
</dbReference>
<dbReference type="InterPro" id="IPR049083">
    <property type="entry name" value="TACO1_YebC_N"/>
</dbReference>
<dbReference type="InterPro" id="IPR002876">
    <property type="entry name" value="Transcrip_reg_TACO1-like"/>
</dbReference>
<dbReference type="InterPro" id="IPR026564">
    <property type="entry name" value="Transcrip_reg_TACO1-like_dom3"/>
</dbReference>
<dbReference type="InterPro" id="IPR029072">
    <property type="entry name" value="YebC-like"/>
</dbReference>
<dbReference type="NCBIfam" id="NF001030">
    <property type="entry name" value="PRK00110.1"/>
    <property type="match status" value="1"/>
</dbReference>
<dbReference type="NCBIfam" id="NF009044">
    <property type="entry name" value="PRK12378.1"/>
    <property type="match status" value="1"/>
</dbReference>
<dbReference type="NCBIfam" id="TIGR01033">
    <property type="entry name" value="YebC/PmpR family DNA-binding transcriptional regulator"/>
    <property type="match status" value="1"/>
</dbReference>
<dbReference type="PANTHER" id="PTHR12532:SF6">
    <property type="entry name" value="TRANSCRIPTIONAL REGULATORY PROTEIN YEBC-RELATED"/>
    <property type="match status" value="1"/>
</dbReference>
<dbReference type="PANTHER" id="PTHR12532">
    <property type="entry name" value="TRANSLATIONAL ACTIVATOR OF CYTOCHROME C OXIDASE 1"/>
    <property type="match status" value="1"/>
</dbReference>
<dbReference type="Pfam" id="PF20772">
    <property type="entry name" value="TACO1_YebC_N"/>
    <property type="match status" value="1"/>
</dbReference>
<dbReference type="Pfam" id="PF01709">
    <property type="entry name" value="Transcrip_reg"/>
    <property type="match status" value="1"/>
</dbReference>
<dbReference type="SUPFAM" id="SSF75625">
    <property type="entry name" value="YebC-like"/>
    <property type="match status" value="1"/>
</dbReference>
<comment type="subcellular location">
    <subcellularLocation>
        <location evidence="1">Cytoplasm</location>
    </subcellularLocation>
</comment>
<comment type="similarity">
    <text evidence="1">Belongs to the TACO1 family.</text>
</comment>
<feature type="chain" id="PRO_0000257123" description="Probable transcriptional regulatory protein Rxyl_1318">
    <location>
        <begin position="1"/>
        <end position="250"/>
    </location>
</feature>
<name>Y1318_RUBXD</name>
<sequence>MSGHSKWSTIKRKKGAMDAKRGALFAKLSRAITVAAREGGGDPEANPALALAVQKAKDANMPNDNIQRAIDRGTGAGSEAGDYEHITYEGYAPGGVAVMVEVLTDNRNRAASDIRYIFSKHGGKLGTSGSVAYLFERKGVVLVPADAVGEEELMEAALEAGAEDVELDGDHWRVTTEPSEFMAVRQGLEEAGIRYESAQLSMEPMNTVKLDASTARQTLRLIDALEENDDVQEVYANFDISEEVMAEVAG</sequence>